<sequence>MPSVAGEEPKASSRLLLVSNRLPITIKRTEDGQYDFTGSSGGLVTGLSGLAKTTTFQWYGWPGLEVPDAEAKPLVKRLKDEHGAHPVFVDDELADKHYNGFSNSILWPLFHYHPGEITFDESQWMAYKEVNRLFAKTIAKDVQDGDLIWVHDYHLMLLPEMLRDEIGTSKKNVKIGFFLHTPFPSSEIYRILPVRESLLLSVLHCDLIGFHTYDYARHFLSSCSRILETQTTPNGVEFRGKYVTVAAFPIGIDPEKFIETLKKPKVEERIAQLERKFEGVKLIVGVDRLDYIKGVPQKLHALEVFLTEHPEWIGKVVLVQVAVPSRQDVEEYQNLRAVVNELVGRINGRFGTVEFMPIHFLHQSVNFDELTALYAVSDACLVSSTRDGMNLVSYEYIATQRKRHGVMILSEFTGAAQSLNGALIVNPWNTEELADAIHDAVTMSPEQREINFKKLEKYVFKYTSSWWGESFVSELQRISEHAAKKSNSKGTVDKMPDLVEGVQQFNLGEQREEGRLEPGEFDD</sequence>
<keyword id="KW-0328">Glycosyltransferase</keyword>
<keyword id="KW-1185">Reference proteome</keyword>
<keyword id="KW-0808">Transferase</keyword>
<comment type="function">
    <text evidence="4">Synthase catalytic subunit of the trehalose synthase complex that catalyzes the production of trehalose from glucose-6-phosphate and UDP-alpha-D-glucose in a two step process (PubMed:16946258). The disaccharide trehalose serves as a storage carbohydrate that is mobilized during conidial germination (PubMed:16946258). Trehalose also serves as a protectant for cell integrity during stress (PubMed:16946258).</text>
</comment>
<comment type="catalytic activity">
    <reaction evidence="7">
        <text>D-glucose 6-phosphate + UDP-alpha-D-glucose = alpha,alpha-trehalose 6-phosphate + UDP + H(+)</text>
        <dbReference type="Rhea" id="RHEA:18889"/>
        <dbReference type="ChEBI" id="CHEBI:15378"/>
        <dbReference type="ChEBI" id="CHEBI:58223"/>
        <dbReference type="ChEBI" id="CHEBI:58429"/>
        <dbReference type="ChEBI" id="CHEBI:58885"/>
        <dbReference type="ChEBI" id="CHEBI:61548"/>
        <dbReference type="EC" id="2.4.1.15"/>
    </reaction>
</comment>
<comment type="pathway">
    <text evidence="6">Carbohydrate biosynthesis.</text>
</comment>
<comment type="disruption phenotype">
    <text evidence="4">Decreases cellular trehalose level (PubMed:16946258). Sensitive to thermal stress (PubMed:16946258). Abnormal conidial germination on glucose or fructose carbon sources (PubMed:16946258).</text>
</comment>
<comment type="similarity">
    <text evidence="6">Belongs to the glycosyltransferase 20 family.</text>
</comment>
<name>TPS1_BOTFB</name>
<proteinExistence type="evidence at protein level"/>
<gene>
    <name evidence="5" type="primary">TPS1</name>
    <name evidence="5" type="synonym">Bctps1</name>
    <name evidence="9" type="ORF">BCIN_02g08340</name>
</gene>
<dbReference type="EC" id="2.4.1.15" evidence="7"/>
<dbReference type="EMBL" id="DQ632610">
    <property type="protein sequence ID" value="ABG25558.1"/>
    <property type="molecule type" value="Genomic_DNA"/>
</dbReference>
<dbReference type="EMBL" id="CP009806">
    <property type="protein sequence ID" value="ATZ47566.1"/>
    <property type="molecule type" value="Genomic_DNA"/>
</dbReference>
<dbReference type="SMR" id="A0A384JAD8"/>
<dbReference type="CAZy" id="GT20">
    <property type="family name" value="Glycosyltransferase Family 20"/>
</dbReference>
<dbReference type="EnsemblFungi" id="Bcin02g08340.1">
    <property type="protein sequence ID" value="Bcin02p08340.1"/>
    <property type="gene ID" value="Bcin02g08340"/>
</dbReference>
<dbReference type="VEuPathDB" id="FungiDB:Bcin02g08340"/>
<dbReference type="OrthoDB" id="755951at2759"/>
<dbReference type="PHI-base" id="PHI:650"/>
<dbReference type="Proteomes" id="UP000001798">
    <property type="component" value="Chromosome bcin02"/>
</dbReference>
<dbReference type="GO" id="GO:0005946">
    <property type="term" value="C:alpha,alpha-trehalose-phosphate synthase complex (UDP-forming)"/>
    <property type="evidence" value="ECO:0007669"/>
    <property type="project" value="EnsemblFungi"/>
</dbReference>
<dbReference type="GO" id="GO:0005829">
    <property type="term" value="C:cytosol"/>
    <property type="evidence" value="ECO:0007669"/>
    <property type="project" value="TreeGrafter"/>
</dbReference>
<dbReference type="GO" id="GO:0003825">
    <property type="term" value="F:alpha,alpha-trehalose-phosphate synthase (UDP-forming) activity"/>
    <property type="evidence" value="ECO:0007669"/>
    <property type="project" value="UniProtKB-EC"/>
</dbReference>
<dbReference type="GO" id="GO:0102986">
    <property type="term" value="F:trehalose synthase activity"/>
    <property type="evidence" value="ECO:0000315"/>
    <property type="project" value="UniProtKB"/>
</dbReference>
<dbReference type="GO" id="GO:0004805">
    <property type="term" value="F:trehalose-phosphatase activity"/>
    <property type="evidence" value="ECO:0007669"/>
    <property type="project" value="TreeGrafter"/>
</dbReference>
<dbReference type="GO" id="GO:0034605">
    <property type="term" value="P:cellular response to heat"/>
    <property type="evidence" value="ECO:0007669"/>
    <property type="project" value="TreeGrafter"/>
</dbReference>
<dbReference type="GO" id="GO:0005992">
    <property type="term" value="P:trehalose biosynthetic process"/>
    <property type="evidence" value="ECO:0000315"/>
    <property type="project" value="UniProtKB"/>
</dbReference>
<dbReference type="CDD" id="cd03788">
    <property type="entry name" value="GT20_TPS"/>
    <property type="match status" value="1"/>
</dbReference>
<dbReference type="FunFam" id="3.40.50.2000:FF:000007">
    <property type="entry name" value="Trehalose-6-phosphate synthase"/>
    <property type="match status" value="1"/>
</dbReference>
<dbReference type="FunFam" id="3.40.50.2000:FF:000035">
    <property type="entry name" value="Trehalose-6-phosphate synthase"/>
    <property type="match status" value="1"/>
</dbReference>
<dbReference type="Gene3D" id="3.40.50.2000">
    <property type="entry name" value="Glycogen Phosphorylase B"/>
    <property type="match status" value="2"/>
</dbReference>
<dbReference type="InterPro" id="IPR001830">
    <property type="entry name" value="Glyco_trans_20"/>
</dbReference>
<dbReference type="InterPro" id="IPR012766">
    <property type="entry name" value="Trehalose_OtsA"/>
</dbReference>
<dbReference type="NCBIfam" id="TIGR02400">
    <property type="entry name" value="trehalose_OtsA"/>
    <property type="match status" value="1"/>
</dbReference>
<dbReference type="PANTHER" id="PTHR10788:SF106">
    <property type="entry name" value="BCDNA.GH08860"/>
    <property type="match status" value="1"/>
</dbReference>
<dbReference type="PANTHER" id="PTHR10788">
    <property type="entry name" value="TREHALOSE-6-PHOSPHATE SYNTHASE"/>
    <property type="match status" value="1"/>
</dbReference>
<dbReference type="Pfam" id="PF00982">
    <property type="entry name" value="Glyco_transf_20"/>
    <property type="match status" value="1"/>
</dbReference>
<dbReference type="SUPFAM" id="SSF53756">
    <property type="entry name" value="UDP-Glycosyltransferase/glycogen phosphorylase"/>
    <property type="match status" value="1"/>
</dbReference>
<organism evidence="10">
    <name type="scientific">Botryotinia fuckeliana (strain B05.10)</name>
    <name type="common">Noble rot fungus</name>
    <name type="synonym">Botrytis cinerea</name>
    <dbReference type="NCBI Taxonomy" id="332648"/>
    <lineage>
        <taxon>Eukaryota</taxon>
        <taxon>Fungi</taxon>
        <taxon>Dikarya</taxon>
        <taxon>Ascomycota</taxon>
        <taxon>Pezizomycotina</taxon>
        <taxon>Leotiomycetes</taxon>
        <taxon>Helotiales</taxon>
        <taxon>Sclerotiniaceae</taxon>
        <taxon>Botrytis</taxon>
    </lineage>
</organism>
<evidence type="ECO:0000250" key="1">
    <source>
        <dbReference type="UniProtKB" id="Q92410"/>
    </source>
</evidence>
<evidence type="ECO:0000255" key="2">
    <source>
        <dbReference type="RuleBase" id="RU362045"/>
    </source>
</evidence>
<evidence type="ECO:0000256" key="3">
    <source>
        <dbReference type="SAM" id="MobiDB-lite"/>
    </source>
</evidence>
<evidence type="ECO:0000269" key="4">
    <source>
    </source>
</evidence>
<evidence type="ECO:0000303" key="5">
    <source>
    </source>
</evidence>
<evidence type="ECO:0000305" key="6"/>
<evidence type="ECO:0000305" key="7">
    <source>
    </source>
</evidence>
<evidence type="ECO:0000312" key="8">
    <source>
        <dbReference type="EMBL" id="ABG25558.1"/>
    </source>
</evidence>
<evidence type="ECO:0000312" key="9">
    <source>
        <dbReference type="EMBL" id="ATZ47566.1"/>
    </source>
</evidence>
<evidence type="ECO:0000312" key="10">
    <source>
        <dbReference type="Proteomes" id="UP000001798"/>
    </source>
</evidence>
<protein>
    <recommendedName>
        <fullName evidence="6">Alpha,alpha-trehalose-phosphate synthase [UDP-forming]</fullName>
        <ecNumber evidence="7">2.4.1.15</ecNumber>
    </recommendedName>
    <alternativeName>
        <fullName evidence="2">Trehalose-6-phosphate synthase</fullName>
    </alternativeName>
    <alternativeName>
        <fullName evidence="2">UDP-glucose-glucosephosphate glucosyltransferase</fullName>
    </alternativeName>
</protein>
<accession>A0A384JAD8</accession>
<accession>Q156F5</accession>
<feature type="chain" id="PRO_0000453072" description="Alpha,alpha-trehalose-phosphate synthase [UDP-forming]">
    <location>
        <begin position="1"/>
        <end position="523"/>
    </location>
</feature>
<feature type="region of interest" description="Disordered" evidence="3">
    <location>
        <begin position="503"/>
        <end position="523"/>
    </location>
</feature>
<feature type="compositionally biased region" description="Basic and acidic residues" evidence="3">
    <location>
        <begin position="509"/>
        <end position="523"/>
    </location>
</feature>
<feature type="binding site" evidence="1">
    <location>
        <position position="98"/>
    </location>
    <ligand>
        <name>D-glucose 6-phosphate</name>
        <dbReference type="ChEBI" id="CHEBI:61548"/>
    </ligand>
</feature>
<feature type="binding site" evidence="1">
    <location>
        <position position="152"/>
    </location>
    <ligand>
        <name>D-glucose 6-phosphate</name>
        <dbReference type="ChEBI" id="CHEBI:61548"/>
    </ligand>
</feature>
<feature type="binding site" evidence="1">
    <location>
        <position position="288"/>
    </location>
    <ligand>
        <name>UDP</name>
        <dbReference type="ChEBI" id="CHEBI:58223"/>
    </ligand>
</feature>
<feature type="binding site" evidence="1">
    <location>
        <position position="288"/>
    </location>
    <ligand>
        <name>UDP-alpha-D-glucose</name>
        <dbReference type="ChEBI" id="CHEBI:58885"/>
    </ligand>
</feature>
<feature type="binding site" evidence="1">
    <location>
        <position position="293"/>
    </location>
    <ligand>
        <name>UDP</name>
        <dbReference type="ChEBI" id="CHEBI:58223"/>
    </ligand>
</feature>
<feature type="binding site" evidence="1">
    <location>
        <position position="293"/>
    </location>
    <ligand>
        <name>UDP-alpha-D-glucose</name>
        <dbReference type="ChEBI" id="CHEBI:58885"/>
    </ligand>
</feature>
<feature type="binding site" evidence="1">
    <location>
        <position position="326"/>
    </location>
    <ligand>
        <name>D-glucose 6-phosphate</name>
        <dbReference type="ChEBI" id="CHEBI:61548"/>
    </ligand>
</feature>
<feature type="binding site" evidence="1">
    <location>
        <begin position="387"/>
        <end position="395"/>
    </location>
    <ligand>
        <name>UDP-alpha-D-glucose</name>
        <dbReference type="ChEBI" id="CHEBI:58885"/>
    </ligand>
</feature>
<feature type="binding site" evidence="1">
    <location>
        <begin position="391"/>
        <end position="395"/>
    </location>
    <ligand>
        <name>UDP</name>
        <dbReference type="ChEBI" id="CHEBI:58223"/>
    </ligand>
</feature>
<reference evidence="8" key="1">
    <citation type="journal article" date="2006" name="Microbiology">
        <title>Trehalose metabolism is important for heat stress tolerance and spore germination of Botrytis cinerea.</title>
        <authorList>
            <person name="Doehlemann G."/>
            <person name="Berndt P."/>
            <person name="Hahn M."/>
        </authorList>
    </citation>
    <scope>NUCLEOTIDE SEQUENCE [GENOMIC DNA]</scope>
    <scope>FUNCTION</scope>
    <scope>CATALYTIC ACTIVITY</scope>
    <scope>DISRUPTION PHENOTYPE</scope>
</reference>
<reference evidence="10" key="2">
    <citation type="journal article" date="2011" name="PLoS Genet.">
        <title>Genomic analysis of the necrotrophic fungal pathogens Sclerotinia sclerotiorum and Botrytis cinerea.</title>
        <authorList>
            <person name="Amselem J."/>
            <person name="Cuomo C.A."/>
            <person name="van Kan J.A.L."/>
            <person name="Viaud M."/>
            <person name="Benito E.P."/>
            <person name="Couloux A."/>
            <person name="Coutinho P.M."/>
            <person name="de Vries R.P."/>
            <person name="Dyer P.S."/>
            <person name="Fillinger S."/>
            <person name="Fournier E."/>
            <person name="Gout L."/>
            <person name="Hahn M."/>
            <person name="Kohn L."/>
            <person name="Lapalu N."/>
            <person name="Plummer K.M."/>
            <person name="Pradier J.-M."/>
            <person name="Quevillon E."/>
            <person name="Sharon A."/>
            <person name="Simon A."/>
            <person name="ten Have A."/>
            <person name="Tudzynski B."/>
            <person name="Tudzynski P."/>
            <person name="Wincker P."/>
            <person name="Andrew M."/>
            <person name="Anthouard V."/>
            <person name="Beever R.E."/>
            <person name="Beffa R."/>
            <person name="Benoit I."/>
            <person name="Bouzid O."/>
            <person name="Brault B."/>
            <person name="Chen Z."/>
            <person name="Choquer M."/>
            <person name="Collemare J."/>
            <person name="Cotton P."/>
            <person name="Danchin E.G."/>
            <person name="Da Silva C."/>
            <person name="Gautier A."/>
            <person name="Giraud C."/>
            <person name="Giraud T."/>
            <person name="Gonzalez C."/>
            <person name="Grossetete S."/>
            <person name="Gueldener U."/>
            <person name="Henrissat B."/>
            <person name="Howlett B.J."/>
            <person name="Kodira C."/>
            <person name="Kretschmer M."/>
            <person name="Lappartient A."/>
            <person name="Leroch M."/>
            <person name="Levis C."/>
            <person name="Mauceli E."/>
            <person name="Neuveglise C."/>
            <person name="Oeser B."/>
            <person name="Pearson M."/>
            <person name="Poulain J."/>
            <person name="Poussereau N."/>
            <person name="Quesneville H."/>
            <person name="Rascle C."/>
            <person name="Schumacher J."/>
            <person name="Segurens B."/>
            <person name="Sexton A."/>
            <person name="Silva E."/>
            <person name="Sirven C."/>
            <person name="Soanes D.M."/>
            <person name="Talbot N.J."/>
            <person name="Templeton M."/>
            <person name="Yandava C."/>
            <person name="Yarden O."/>
            <person name="Zeng Q."/>
            <person name="Rollins J.A."/>
            <person name="Lebrun M.-H."/>
            <person name="Dickman M."/>
        </authorList>
    </citation>
    <scope>NUCLEOTIDE SEQUENCE [LARGE SCALE GENOMIC DNA]</scope>
    <source>
        <strain evidence="10">B05.10</strain>
    </source>
</reference>
<reference evidence="10" key="3">
    <citation type="journal article" date="2017" name="Mol. Plant Pathol.">
        <title>A gapless genome sequence of the fungus Botrytis cinerea.</title>
        <authorList>
            <person name="van Kan J.A.L."/>
            <person name="Stassen J.H.M."/>
            <person name="Mosbach A."/>
            <person name="van der Lee T.A.J."/>
            <person name="Faino L."/>
            <person name="Farmer A.D."/>
            <person name="Papasotiriou D.G."/>
            <person name="Zhou S."/>
            <person name="Seidl M.F."/>
            <person name="Cottam E."/>
            <person name="Edel D."/>
            <person name="Hahn M."/>
            <person name="Schwartz D.C."/>
            <person name="Dietrich R.A."/>
            <person name="Widdison S."/>
            <person name="Scalliet G."/>
        </authorList>
    </citation>
    <scope>NUCLEOTIDE SEQUENCE [LARGE SCALE GENOMIC DNA]</scope>
    <source>
        <strain evidence="10">B05.10</strain>
    </source>
</reference>